<gene>
    <name evidence="1" type="primary">tagH</name>
    <name type="ordered locus">MW0599</name>
</gene>
<proteinExistence type="inferred from homology"/>
<evidence type="ECO:0000255" key="1">
    <source>
        <dbReference type="HAMAP-Rule" id="MF_01715"/>
    </source>
</evidence>
<keyword id="KW-0067">ATP-binding</keyword>
<keyword id="KW-1003">Cell membrane</keyword>
<keyword id="KW-0472">Membrane</keyword>
<keyword id="KW-0547">Nucleotide-binding</keyword>
<keyword id="KW-1278">Translocase</keyword>
<keyword id="KW-0813">Transport</keyword>
<protein>
    <recommendedName>
        <fullName evidence="1">Teichoic acids export ATP-binding protein TagH</fullName>
        <ecNumber evidence="1">7.5.2.4</ecNumber>
    </recommendedName>
</protein>
<name>TAGH_STAAW</name>
<sequence length="264" mass="29763">MNVSVNIKNVTKEYRIYRTNKERMKDALIPKHKNKTFFALDDISLKAYEGDVIGLVGINGSGKSTLSNIIGGSLSPTVGKVDRNGEVSVIAISAGLSGQLTGIENIEFKMLCMGFKRKEIKAMTPKIIEFSELGEFIYQPVKKYSSGMRAKLGFSINITVNPDILVIDEALSVGDQTFAQKCLDKIYEFKEQNKTIFFVSHNLGQVRQFCTKIAWIEGGKLKDYGELDDVLPKYEAFLNDFKKKSKAEQKEFRNKLDESRFVIK</sequence>
<feature type="chain" id="PRO_0000093001" description="Teichoic acids export ATP-binding protein TagH">
    <location>
        <begin position="1"/>
        <end position="264"/>
    </location>
</feature>
<feature type="domain" description="ABC transporter" evidence="1">
    <location>
        <begin position="5"/>
        <end position="243"/>
    </location>
</feature>
<feature type="binding site" evidence="1">
    <location>
        <begin position="57"/>
        <end position="64"/>
    </location>
    <ligand>
        <name>ATP</name>
        <dbReference type="ChEBI" id="CHEBI:30616"/>
    </ligand>
</feature>
<organism>
    <name type="scientific">Staphylococcus aureus (strain MW2)</name>
    <dbReference type="NCBI Taxonomy" id="196620"/>
    <lineage>
        <taxon>Bacteria</taxon>
        <taxon>Bacillati</taxon>
        <taxon>Bacillota</taxon>
        <taxon>Bacilli</taxon>
        <taxon>Bacillales</taxon>
        <taxon>Staphylococcaceae</taxon>
        <taxon>Staphylococcus</taxon>
    </lineage>
</organism>
<reference key="1">
    <citation type="journal article" date="2002" name="Lancet">
        <title>Genome and virulence determinants of high virulence community-acquired MRSA.</title>
        <authorList>
            <person name="Baba T."/>
            <person name="Takeuchi F."/>
            <person name="Kuroda M."/>
            <person name="Yuzawa H."/>
            <person name="Aoki K."/>
            <person name="Oguchi A."/>
            <person name="Nagai Y."/>
            <person name="Iwama N."/>
            <person name="Asano K."/>
            <person name="Naimi T."/>
            <person name="Kuroda H."/>
            <person name="Cui L."/>
            <person name="Yamamoto K."/>
            <person name="Hiramatsu K."/>
        </authorList>
    </citation>
    <scope>NUCLEOTIDE SEQUENCE [LARGE SCALE GENOMIC DNA]</scope>
    <source>
        <strain>MW2</strain>
    </source>
</reference>
<comment type="function">
    <text evidence="1">Part of the ABC transporter complex TagGH involved in teichoic acids export. Responsible for energy coupling to the transport system.</text>
</comment>
<comment type="catalytic activity">
    <reaction evidence="1">
        <text>ATP + H2O + teichoic acidSide 1 = ADP + phosphate + teichoic acidSide 2.</text>
        <dbReference type="EC" id="7.5.2.4"/>
    </reaction>
</comment>
<comment type="subunit">
    <text evidence="1">The complex is composed of two ATP-binding proteins (TagH) and two transmembrane proteins (TagG).</text>
</comment>
<comment type="subcellular location">
    <subcellularLocation>
        <location evidence="1">Cell membrane</location>
        <topology evidence="1">Peripheral membrane protein</topology>
    </subcellularLocation>
</comment>
<comment type="similarity">
    <text evidence="1">Belongs to the ABC transporter superfamily. Teichoic acids exporter (TC 3.A.1.104.1) family.</text>
</comment>
<accession>Q8NXS6</accession>
<dbReference type="EC" id="7.5.2.4" evidence="1"/>
<dbReference type="EMBL" id="BA000033">
    <property type="protein sequence ID" value="BAB94464.1"/>
    <property type="molecule type" value="Genomic_DNA"/>
</dbReference>
<dbReference type="RefSeq" id="WP_001103232.1">
    <property type="nucleotide sequence ID" value="NC_003923.1"/>
</dbReference>
<dbReference type="SMR" id="Q8NXS6"/>
<dbReference type="GeneID" id="98344978"/>
<dbReference type="KEGG" id="sam:MW0599"/>
<dbReference type="HOGENOM" id="CLU_000604_1_2_9"/>
<dbReference type="GO" id="GO:0005886">
    <property type="term" value="C:plasma membrane"/>
    <property type="evidence" value="ECO:0007669"/>
    <property type="project" value="UniProtKB-SubCell"/>
</dbReference>
<dbReference type="GO" id="GO:0015438">
    <property type="term" value="F:ABC-type teichoic acid transporter activity"/>
    <property type="evidence" value="ECO:0007669"/>
    <property type="project" value="UniProtKB-EC"/>
</dbReference>
<dbReference type="GO" id="GO:0005524">
    <property type="term" value="F:ATP binding"/>
    <property type="evidence" value="ECO:0007669"/>
    <property type="project" value="UniProtKB-KW"/>
</dbReference>
<dbReference type="GO" id="GO:0016887">
    <property type="term" value="F:ATP hydrolysis activity"/>
    <property type="evidence" value="ECO:0007669"/>
    <property type="project" value="InterPro"/>
</dbReference>
<dbReference type="CDD" id="cd03220">
    <property type="entry name" value="ABC_KpsT_Wzt"/>
    <property type="match status" value="1"/>
</dbReference>
<dbReference type="FunFam" id="3.40.50.300:FF:003010">
    <property type="entry name" value="Teichoic acids export ATP-binding protein TagH"/>
    <property type="match status" value="1"/>
</dbReference>
<dbReference type="Gene3D" id="3.40.50.300">
    <property type="entry name" value="P-loop containing nucleotide triphosphate hydrolases"/>
    <property type="match status" value="1"/>
</dbReference>
<dbReference type="InterPro" id="IPR003593">
    <property type="entry name" value="AAA+_ATPase"/>
</dbReference>
<dbReference type="InterPro" id="IPR003439">
    <property type="entry name" value="ABC_transporter-like_ATP-bd"/>
</dbReference>
<dbReference type="InterPro" id="IPR017871">
    <property type="entry name" value="ABC_transporter-like_CS"/>
</dbReference>
<dbReference type="InterPro" id="IPR015860">
    <property type="entry name" value="ABC_transpr_TagH-like"/>
</dbReference>
<dbReference type="InterPro" id="IPR050683">
    <property type="entry name" value="Bact_Polysacc_Export_ATP-bd"/>
</dbReference>
<dbReference type="InterPro" id="IPR027417">
    <property type="entry name" value="P-loop_NTPase"/>
</dbReference>
<dbReference type="NCBIfam" id="NF010066">
    <property type="entry name" value="PRK13546.1"/>
    <property type="match status" value="1"/>
</dbReference>
<dbReference type="PANTHER" id="PTHR46743">
    <property type="entry name" value="TEICHOIC ACIDS EXPORT ATP-BINDING PROTEIN TAGH"/>
    <property type="match status" value="1"/>
</dbReference>
<dbReference type="PANTHER" id="PTHR46743:SF2">
    <property type="entry name" value="TEICHOIC ACIDS EXPORT ATP-BINDING PROTEIN TAGH"/>
    <property type="match status" value="1"/>
</dbReference>
<dbReference type="Pfam" id="PF00005">
    <property type="entry name" value="ABC_tran"/>
    <property type="match status" value="1"/>
</dbReference>
<dbReference type="SMART" id="SM00382">
    <property type="entry name" value="AAA"/>
    <property type="match status" value="1"/>
</dbReference>
<dbReference type="SUPFAM" id="SSF52540">
    <property type="entry name" value="P-loop containing nucleoside triphosphate hydrolases"/>
    <property type="match status" value="1"/>
</dbReference>
<dbReference type="PROSITE" id="PS00211">
    <property type="entry name" value="ABC_TRANSPORTER_1"/>
    <property type="match status" value="1"/>
</dbReference>
<dbReference type="PROSITE" id="PS50893">
    <property type="entry name" value="ABC_TRANSPORTER_2"/>
    <property type="match status" value="1"/>
</dbReference>
<dbReference type="PROSITE" id="PS51251">
    <property type="entry name" value="TAGH"/>
    <property type="match status" value="1"/>
</dbReference>